<accession>P58828</accession>
<gene>
    <name type="ordered locus">MA_4659</name>
</gene>
<sequence>MWSRFMINVKVSAAVYPTEDPEKVTKAISVLFTGIELQKEPLDAAESEKRVSPAFRLTGEGGLDLLFTLHGLIRREAIIDSIRNKVFSKGLSSEGLLVRFLLNKQAAFVGIPSVPAEEEPLGSIEVVIRTDSPEEMEKLFEWLLPLTEEGVPVVEVEMDYVERG</sequence>
<reference key="1">
    <citation type="journal article" date="2002" name="Genome Res.">
        <title>The genome of Methanosarcina acetivorans reveals extensive metabolic and physiological diversity.</title>
        <authorList>
            <person name="Galagan J.E."/>
            <person name="Nusbaum C."/>
            <person name="Roy A."/>
            <person name="Endrizzi M.G."/>
            <person name="Macdonald P."/>
            <person name="FitzHugh W."/>
            <person name="Calvo S."/>
            <person name="Engels R."/>
            <person name="Smirnov S."/>
            <person name="Atnoor D."/>
            <person name="Brown A."/>
            <person name="Allen N."/>
            <person name="Naylor J."/>
            <person name="Stange-Thomann N."/>
            <person name="DeArellano K."/>
            <person name="Johnson R."/>
            <person name="Linton L."/>
            <person name="McEwan P."/>
            <person name="McKernan K."/>
            <person name="Talamas J."/>
            <person name="Tirrell A."/>
            <person name="Ye W."/>
            <person name="Zimmer A."/>
            <person name="Barber R.D."/>
            <person name="Cann I."/>
            <person name="Graham D.E."/>
            <person name="Grahame D.A."/>
            <person name="Guss A.M."/>
            <person name="Hedderich R."/>
            <person name="Ingram-Smith C."/>
            <person name="Kuettner H.C."/>
            <person name="Krzycki J.A."/>
            <person name="Leigh J.A."/>
            <person name="Li W."/>
            <person name="Liu J."/>
            <person name="Mukhopadhyay B."/>
            <person name="Reeve J.N."/>
            <person name="Smith K."/>
            <person name="Springer T.A."/>
            <person name="Umayam L.A."/>
            <person name="White O."/>
            <person name="White R.H."/>
            <person name="de Macario E.C."/>
            <person name="Ferry J.G."/>
            <person name="Jarrell K.F."/>
            <person name="Jing H."/>
            <person name="Macario A.J.L."/>
            <person name="Paulsen I.T."/>
            <person name="Pritchett M."/>
            <person name="Sowers K.R."/>
            <person name="Swanson R.V."/>
            <person name="Zinder S.H."/>
            <person name="Lander E."/>
            <person name="Metcalf W.W."/>
            <person name="Birren B."/>
        </authorList>
    </citation>
    <scope>NUCLEOTIDE SEQUENCE [LARGE SCALE GENOMIC DNA]</scope>
    <source>
        <strain>ATCC 35395 / DSM 2834 / JCM 12185 / C2A</strain>
    </source>
</reference>
<dbReference type="EMBL" id="AE010299">
    <property type="protein sequence ID" value="AAM07993.1"/>
    <property type="molecule type" value="Genomic_DNA"/>
</dbReference>
<dbReference type="SMR" id="P58828"/>
<dbReference type="STRING" id="188937.MA_4659"/>
<dbReference type="EnsemblBacteria" id="AAM07993">
    <property type="protein sequence ID" value="AAM07993"/>
    <property type="gene ID" value="MA_4659"/>
</dbReference>
<dbReference type="KEGG" id="mac:MA_4659"/>
<dbReference type="HOGENOM" id="CLU_134829_0_0_2"/>
<dbReference type="InParanoid" id="P58828"/>
<dbReference type="PhylomeDB" id="P58828"/>
<dbReference type="Proteomes" id="UP000002487">
    <property type="component" value="Chromosome"/>
</dbReference>
<dbReference type="Gene3D" id="3.30.1440.10">
    <property type="match status" value="1"/>
</dbReference>
<dbReference type="HAMAP" id="MF_01112">
    <property type="entry name" value="UPF0201"/>
    <property type="match status" value="1"/>
</dbReference>
<dbReference type="InterPro" id="IPR002739">
    <property type="entry name" value="PAB1135-like"/>
</dbReference>
<dbReference type="InterPro" id="IPR022803">
    <property type="entry name" value="Ribosomal_uL5_dom_sf"/>
</dbReference>
<dbReference type="PANTHER" id="PTHR39652">
    <property type="entry name" value="UPF0201 PROTEIN TK1335"/>
    <property type="match status" value="1"/>
</dbReference>
<dbReference type="PANTHER" id="PTHR39652:SF1">
    <property type="entry name" value="UPF0201 PROTEIN TK1335"/>
    <property type="match status" value="1"/>
</dbReference>
<dbReference type="Pfam" id="PF01877">
    <property type="entry name" value="RNA_binding"/>
    <property type="match status" value="1"/>
</dbReference>
<dbReference type="SUPFAM" id="SSF55282">
    <property type="entry name" value="RL5-like"/>
    <property type="match status" value="1"/>
</dbReference>
<organism>
    <name type="scientific">Methanosarcina acetivorans (strain ATCC 35395 / DSM 2834 / JCM 12185 / C2A)</name>
    <dbReference type="NCBI Taxonomy" id="188937"/>
    <lineage>
        <taxon>Archaea</taxon>
        <taxon>Methanobacteriati</taxon>
        <taxon>Methanobacteriota</taxon>
        <taxon>Stenosarchaea group</taxon>
        <taxon>Methanomicrobia</taxon>
        <taxon>Methanosarcinales</taxon>
        <taxon>Methanosarcinaceae</taxon>
        <taxon>Methanosarcina</taxon>
    </lineage>
</organism>
<comment type="similarity">
    <text evidence="1">Belongs to the UPF0201 family.</text>
</comment>
<keyword id="KW-1185">Reference proteome</keyword>
<name>Y4659_METAC</name>
<evidence type="ECO:0000255" key="1">
    <source>
        <dbReference type="HAMAP-Rule" id="MF_01112"/>
    </source>
</evidence>
<feature type="chain" id="PRO_0000094509" description="UPF0201 protein MA_4659">
    <location>
        <begin position="1"/>
        <end position="164"/>
    </location>
</feature>
<proteinExistence type="inferred from homology"/>
<protein>
    <recommendedName>
        <fullName evidence="1">UPF0201 protein MA_4659</fullName>
    </recommendedName>
</protein>